<accession>Q9ULG3</accession>
<accession>Q8IXY7</accession>
<accession>Q8N5T4</accession>
<reference key="1">
    <citation type="journal article" date="1999" name="DNA Res.">
        <title>Prediction of the coding sequences of unidentified human genes. XV. The complete sequences of 100 new cDNA clones from brain which code for large proteins in vitro.</title>
        <authorList>
            <person name="Nagase T."/>
            <person name="Ishikawa K."/>
            <person name="Kikuno R."/>
            <person name="Hirosawa M."/>
            <person name="Nomura N."/>
            <person name="Ohara O."/>
        </authorList>
    </citation>
    <scope>NUCLEOTIDE SEQUENCE [LARGE SCALE MRNA] (ISOFORM 1)</scope>
    <source>
        <tissue>Brain</tissue>
    </source>
</reference>
<reference key="2">
    <citation type="submission" date="2005-09" db="EMBL/GenBank/DDBJ databases">
        <authorList>
            <person name="Mural R.J."/>
            <person name="Istrail S."/>
            <person name="Sutton G.G."/>
            <person name="Florea L."/>
            <person name="Halpern A.L."/>
            <person name="Mobarry C.M."/>
            <person name="Lippert R."/>
            <person name="Walenz B."/>
            <person name="Shatkay H."/>
            <person name="Dew I."/>
            <person name="Miller J.R."/>
            <person name="Flanigan M.J."/>
            <person name="Edwards N.J."/>
            <person name="Bolanos R."/>
            <person name="Fasulo D."/>
            <person name="Halldorsson B.V."/>
            <person name="Hannenhalli S."/>
            <person name="Turner R."/>
            <person name="Yooseph S."/>
            <person name="Lu F."/>
            <person name="Nusskern D.R."/>
            <person name="Shue B.C."/>
            <person name="Zheng X.H."/>
            <person name="Zhong F."/>
            <person name="Delcher A.L."/>
            <person name="Huson D.H."/>
            <person name="Kravitz S.A."/>
            <person name="Mouchard L."/>
            <person name="Reinert K."/>
            <person name="Remington K.A."/>
            <person name="Clark A.G."/>
            <person name="Waterman M.S."/>
            <person name="Eichler E.E."/>
            <person name="Adams M.D."/>
            <person name="Hunkapiller M.W."/>
            <person name="Myers E.W."/>
            <person name="Venter J.C."/>
        </authorList>
    </citation>
    <scope>NUCLEOTIDE SEQUENCE [LARGE SCALE GENOMIC DNA]</scope>
</reference>
<reference key="3">
    <citation type="journal article" date="2004" name="Genome Res.">
        <title>The status, quality, and expansion of the NIH full-length cDNA project: the Mammalian Gene Collection (MGC).</title>
        <authorList>
            <consortium name="The MGC Project Team"/>
        </authorList>
    </citation>
    <scope>NUCLEOTIDE SEQUENCE [LARGE SCALE MRNA] (ISOFORMS 1 AND 2)</scope>
    <source>
        <tissue>Brain</tissue>
        <tissue>Testis</tissue>
    </source>
</reference>
<gene>
    <name evidence="4" type="primary">CFAP92</name>
    <name type="synonym">KIAA1257</name>
</gene>
<name>CFA92_HUMAN</name>
<dbReference type="EMBL" id="AB033083">
    <property type="protein sequence ID" value="BAA86571.1"/>
    <property type="status" value="ALT_INIT"/>
    <property type="molecule type" value="mRNA"/>
</dbReference>
<dbReference type="EMBL" id="CH471052">
    <property type="protein sequence ID" value="EAW79289.1"/>
    <property type="status" value="ALT_INIT"/>
    <property type="molecule type" value="Genomic_DNA"/>
</dbReference>
<dbReference type="EMBL" id="BC031632">
    <property type="protein sequence ID" value="AAH31632.1"/>
    <property type="molecule type" value="mRNA"/>
</dbReference>
<dbReference type="EMBL" id="BC038736">
    <property type="protein sequence ID" value="AAH38736.1"/>
    <property type="status" value="ALT_INIT"/>
    <property type="molecule type" value="mRNA"/>
</dbReference>
<dbReference type="CCDS" id="CCDS46905.1">
    <molecule id="Q9ULG3-1"/>
</dbReference>
<dbReference type="CCDS" id="CCDS87133.1">
    <molecule id="Q9ULG3-2"/>
</dbReference>
<dbReference type="RefSeq" id="NP_001335451.1">
    <molecule id="Q9ULG3-2"/>
    <property type="nucleotide sequence ID" value="NM_001348522.2"/>
</dbReference>
<dbReference type="RefSeq" id="NP_001335452.1">
    <molecule id="Q9ULG3-2"/>
    <property type="nucleotide sequence ID" value="NM_001348523.2"/>
</dbReference>
<dbReference type="RefSeq" id="NP_065792.1">
    <molecule id="Q9ULG3-1"/>
    <property type="nucleotide sequence ID" value="NM_020741.3"/>
</dbReference>
<dbReference type="BioGRID" id="121566">
    <property type="interactions" value="1"/>
</dbReference>
<dbReference type="FunCoup" id="Q9ULG3">
    <property type="interactions" value="67"/>
</dbReference>
<dbReference type="IntAct" id="Q9ULG3">
    <property type="interactions" value="1"/>
</dbReference>
<dbReference type="STRING" id="9606.ENSP00000265068"/>
<dbReference type="GlyGen" id="Q9ULG3">
    <property type="glycosylation" value="2 sites, 1 O-linked glycan (2 sites)"/>
</dbReference>
<dbReference type="iPTMnet" id="Q9ULG3"/>
<dbReference type="PhosphoSitePlus" id="Q9ULG3"/>
<dbReference type="SwissPalm" id="Q9ULG3"/>
<dbReference type="BioMuta" id="KIAA1257"/>
<dbReference type="DMDM" id="172044692"/>
<dbReference type="MassIVE" id="Q9ULG3"/>
<dbReference type="PaxDb" id="9606-ENSP00000265068"/>
<dbReference type="PeptideAtlas" id="Q9ULG3"/>
<dbReference type="ProteomicsDB" id="85014">
    <molecule id="Q9ULG3-1"/>
</dbReference>
<dbReference type="ProteomicsDB" id="85015">
    <molecule id="Q9ULG3-2"/>
</dbReference>
<dbReference type="Antibodypedia" id="55543">
    <property type="antibodies" value="50 antibodies from 15 providers"/>
</dbReference>
<dbReference type="DNASU" id="57501"/>
<dbReference type="Ensembl" id="ENST00000265068.9">
    <molecule id="Q9ULG3-1"/>
    <property type="protein sequence ID" value="ENSP00000265068.5"/>
    <property type="gene ID" value="ENSG00000114656.13"/>
</dbReference>
<dbReference type="Ensembl" id="ENST00000515659.1">
    <molecule id="Q9ULG3-2"/>
    <property type="protein sequence ID" value="ENSP00000422539.1"/>
    <property type="gene ID" value="ENSG00000114656.13"/>
</dbReference>
<dbReference type="GeneID" id="57501"/>
<dbReference type="KEGG" id="hsa:57501"/>
<dbReference type="UCSC" id="uc003eli.5">
    <molecule id="Q9ULG3-1"/>
    <property type="organism name" value="human"/>
</dbReference>
<dbReference type="AGR" id="HGNC:29231"/>
<dbReference type="CTD" id="57501"/>
<dbReference type="DisGeNET" id="57501"/>
<dbReference type="GeneCards" id="CFAP92"/>
<dbReference type="HGNC" id="HGNC:29231">
    <property type="gene designation" value="CFAP92"/>
</dbReference>
<dbReference type="HPA" id="ENSG00000114656">
    <property type="expression patterns" value="Tissue enriched (testis)"/>
</dbReference>
<dbReference type="MalaCards" id="CFAP92"/>
<dbReference type="neXtProt" id="NX_Q9ULG3"/>
<dbReference type="OpenTargets" id="ENSG00000114656"/>
<dbReference type="PharmGKB" id="PA142671603"/>
<dbReference type="VEuPathDB" id="HostDB:ENSG00000114656"/>
<dbReference type="eggNOG" id="ENOG502S93N">
    <property type="taxonomic scope" value="Eukaryota"/>
</dbReference>
<dbReference type="GeneTree" id="ENSGT00390000008330"/>
<dbReference type="InParanoid" id="Q9ULG3"/>
<dbReference type="OrthoDB" id="188352at2759"/>
<dbReference type="PAN-GO" id="Q9ULG3">
    <property type="GO annotations" value="0 GO annotations based on evolutionary models"/>
</dbReference>
<dbReference type="PhylomeDB" id="Q9ULG3"/>
<dbReference type="TreeFam" id="TF335973"/>
<dbReference type="PathwayCommons" id="Q9ULG3"/>
<dbReference type="SignaLink" id="Q9ULG3"/>
<dbReference type="BioGRID-ORCS" id="57501">
    <property type="hits" value="18 hits in 1152 CRISPR screens"/>
</dbReference>
<dbReference type="ChiTaRS" id="KIAA1257">
    <property type="organism name" value="human"/>
</dbReference>
<dbReference type="GenomeRNAi" id="57501"/>
<dbReference type="Pharos" id="Q9ULG3">
    <property type="development level" value="Tdark"/>
</dbReference>
<dbReference type="PRO" id="PR:Q9ULG3"/>
<dbReference type="Proteomes" id="UP000005640">
    <property type="component" value="Chromosome 3"/>
</dbReference>
<dbReference type="RNAct" id="Q9ULG3">
    <property type="molecule type" value="protein"/>
</dbReference>
<dbReference type="Bgee" id="ENSG00000114656">
    <property type="expression patterns" value="Expressed in left testis and 101 other cell types or tissues"/>
</dbReference>
<dbReference type="ExpressionAtlas" id="Q9ULG3">
    <property type="expression patterns" value="baseline and differential"/>
</dbReference>
<dbReference type="InterPro" id="IPR027876">
    <property type="entry name" value="DUF4550"/>
</dbReference>
<dbReference type="PANTHER" id="PTHR33667:SF7">
    <property type="entry name" value="RIKEN CDNA 1810020O05 GENE"/>
    <property type="match status" value="1"/>
</dbReference>
<dbReference type="PANTHER" id="PTHR33667">
    <property type="entry name" value="SI:DKEY-57N24.6"/>
    <property type="match status" value="1"/>
</dbReference>
<dbReference type="Pfam" id="PF15084">
    <property type="entry name" value="DUF4550"/>
    <property type="match status" value="1"/>
</dbReference>
<feature type="chain" id="PRO_0000320679" description="Uncharacterized protein CFAP92">
    <location>
        <begin position="1"/>
        <end position="409"/>
    </location>
</feature>
<feature type="region of interest" description="Disordered" evidence="1">
    <location>
        <begin position="36"/>
        <end position="67"/>
    </location>
</feature>
<feature type="region of interest" description="Disordered" evidence="1">
    <location>
        <begin position="239"/>
        <end position="298"/>
    </location>
</feature>
<feature type="region of interest" description="Disordered" evidence="1">
    <location>
        <begin position="338"/>
        <end position="373"/>
    </location>
</feature>
<feature type="compositionally biased region" description="Basic and acidic residues" evidence="1">
    <location>
        <begin position="36"/>
        <end position="50"/>
    </location>
</feature>
<feature type="compositionally biased region" description="Low complexity" evidence="1">
    <location>
        <begin position="51"/>
        <end position="67"/>
    </location>
</feature>
<feature type="compositionally biased region" description="Basic and acidic residues" evidence="1">
    <location>
        <begin position="245"/>
        <end position="265"/>
    </location>
</feature>
<feature type="compositionally biased region" description="Polar residues" evidence="1">
    <location>
        <begin position="268"/>
        <end position="281"/>
    </location>
</feature>
<feature type="compositionally biased region" description="Basic and acidic residues" evidence="1">
    <location>
        <begin position="282"/>
        <end position="294"/>
    </location>
</feature>
<feature type="compositionally biased region" description="Basic and acidic residues" evidence="1">
    <location>
        <begin position="338"/>
        <end position="350"/>
    </location>
</feature>
<feature type="splice variant" id="VSP_031739" description="In isoform 2." evidence="2">
    <location>
        <begin position="1"/>
        <end position="112"/>
    </location>
</feature>
<sequence>MSLHAWEWEEDPASIEPISSITSFYQSTSECDVEEHLKAKARAQESDSDRPCSSIESSSEPASTFSSDVPHVVPCKFTISLAFPVNMGQKGKYASLIEKYKKHPKTDSSVTKMRRFYHIEYFLLPDDEEPKKVDILLFPMVAKVFLESGVKTVKPWHEGDKAWVSWEQTFNITVTKELLKKINFHKITLRLWNTKDKMSRKVRYYRLKTAGFTDDVGAFHKSEVRHLVLNQRKLSEQGIENTNIVREESNQEHPPGKQEKTEKHPKSLQGSHQAEPETSSKNSEEYEKSLKMDDSSTIQWSVSRTPTISLAGASMMEIKELIESESLSSLTNILDRQRSQIKGKDSEGRRKIQRRHKKPLAEEEADPTLTGPRKQSAFSIQLAVMPLLAGTHCLPCSQQLLLVLWPERP</sequence>
<evidence type="ECO:0000256" key="1">
    <source>
        <dbReference type="SAM" id="MobiDB-lite"/>
    </source>
</evidence>
<evidence type="ECO:0000303" key="2">
    <source>
    </source>
</evidence>
<evidence type="ECO:0000305" key="3"/>
<evidence type="ECO:0000312" key="4">
    <source>
        <dbReference type="HGNC" id="HGNC:29231"/>
    </source>
</evidence>
<keyword id="KW-0025">Alternative splicing</keyword>
<keyword id="KW-1267">Proteomics identification</keyword>
<keyword id="KW-1185">Reference proteome</keyword>
<proteinExistence type="evidence at protein level"/>
<comment type="alternative products">
    <event type="alternative splicing"/>
    <isoform>
        <id>Q9ULG3-1</id>
        <name>1</name>
        <sequence type="displayed"/>
    </isoform>
    <isoform>
        <id>Q9ULG3-2</id>
        <name>2</name>
        <sequence type="described" ref="VSP_031739"/>
    </isoform>
</comment>
<comment type="sequence caution" evidence="3">
    <conflict type="erroneous initiation">
        <sequence resource="EMBL-CDS" id="AAH38736"/>
    </conflict>
    <text>Extended N-terminus.</text>
</comment>
<comment type="sequence caution" evidence="3">
    <conflict type="erroneous initiation">
        <sequence resource="EMBL-CDS" id="BAA86571"/>
    </conflict>
    <text>Extended N-terminus.</text>
</comment>
<comment type="sequence caution" evidence="3">
    <conflict type="erroneous initiation">
        <sequence resource="EMBL-CDS" id="EAW79289"/>
    </conflict>
    <text>Extended N-terminus.</text>
</comment>
<protein>
    <recommendedName>
        <fullName>Uncharacterized protein CFAP92</fullName>
    </recommendedName>
    <alternativeName>
        <fullName evidence="4">Putative cilia and flagella associated protein 92</fullName>
    </alternativeName>
</protein>
<organism>
    <name type="scientific">Homo sapiens</name>
    <name type="common">Human</name>
    <dbReference type="NCBI Taxonomy" id="9606"/>
    <lineage>
        <taxon>Eukaryota</taxon>
        <taxon>Metazoa</taxon>
        <taxon>Chordata</taxon>
        <taxon>Craniata</taxon>
        <taxon>Vertebrata</taxon>
        <taxon>Euteleostomi</taxon>
        <taxon>Mammalia</taxon>
        <taxon>Eutheria</taxon>
        <taxon>Euarchontoglires</taxon>
        <taxon>Primates</taxon>
        <taxon>Haplorrhini</taxon>
        <taxon>Catarrhini</taxon>
        <taxon>Hominidae</taxon>
        <taxon>Homo</taxon>
    </lineage>
</organism>